<reference key="1">
    <citation type="journal article" date="1994" name="J. Bacteriol.">
        <title>Structure and transcriptional regulation of the Escherichia coli adaptive response gene aidB.</title>
        <authorList>
            <person name="Landini P."/>
            <person name="Hajec L.I."/>
            <person name="Volkert M.R."/>
        </authorList>
    </citation>
    <scope>NUCLEOTIDE SEQUENCE [GENOMIC DNA]</scope>
    <scope>FUNCTION</scope>
    <scope>INDUCTION</scope>
    <source>
        <strain>K12 / MV1161</strain>
    </source>
</reference>
<reference key="2">
    <citation type="journal article" date="1995" name="Nucleic Acids Res.">
        <title>Analysis of the Escherichia coli genome VI: DNA sequence of the region from 92.8 through 100 minutes.</title>
        <authorList>
            <person name="Burland V.D."/>
            <person name="Plunkett G. III"/>
            <person name="Sofia H.J."/>
            <person name="Daniels D.L."/>
            <person name="Blattner F.R."/>
        </authorList>
    </citation>
    <scope>NUCLEOTIDE SEQUENCE [LARGE SCALE GENOMIC DNA]</scope>
    <source>
        <strain>K12 / MG1655 / ATCC 47076</strain>
    </source>
</reference>
<reference key="3">
    <citation type="journal article" date="1997" name="Science">
        <title>The complete genome sequence of Escherichia coli K-12.</title>
        <authorList>
            <person name="Blattner F.R."/>
            <person name="Plunkett G. III"/>
            <person name="Bloch C.A."/>
            <person name="Perna N.T."/>
            <person name="Burland V."/>
            <person name="Riley M."/>
            <person name="Collado-Vides J."/>
            <person name="Glasner J.D."/>
            <person name="Rode C.K."/>
            <person name="Mayhew G.F."/>
            <person name="Gregor J."/>
            <person name="Davis N.W."/>
            <person name="Kirkpatrick H.A."/>
            <person name="Goeden M.A."/>
            <person name="Rose D.J."/>
            <person name="Mau B."/>
            <person name="Shao Y."/>
        </authorList>
    </citation>
    <scope>NUCLEOTIDE SEQUENCE [LARGE SCALE GENOMIC DNA]</scope>
    <source>
        <strain>K12 / MG1655 / ATCC 47076</strain>
    </source>
</reference>
<reference key="4">
    <citation type="journal article" date="2006" name="Mol. Syst. Biol.">
        <title>Highly accurate genome sequences of Escherichia coli K-12 strains MG1655 and W3110.</title>
        <authorList>
            <person name="Hayashi K."/>
            <person name="Morooka N."/>
            <person name="Yamamoto Y."/>
            <person name="Fujita K."/>
            <person name="Isono K."/>
            <person name="Choi S."/>
            <person name="Ohtsubo E."/>
            <person name="Baba T."/>
            <person name="Wanner B.L."/>
            <person name="Mori H."/>
            <person name="Horiuchi T."/>
        </authorList>
    </citation>
    <scope>NUCLEOTIDE SEQUENCE [LARGE SCALE GENOMIC DNA]</scope>
    <source>
        <strain>K12 / W3110 / ATCC 27325 / DSM 5911</strain>
    </source>
</reference>
<reference key="5">
    <citation type="journal article" date="2006" name="J. Bacteriol.">
        <title>The AidB component of the Escherichia coli adaptive response to alkylating agents is a flavin-containing, DNA-binding protein.</title>
        <authorList>
            <person name="Rohankhedkar M.S."/>
            <person name="Mulrooney S.B."/>
            <person name="Wedemeyer W.J."/>
            <person name="Hausinger R.P."/>
        </authorList>
    </citation>
    <scope>PROTEIN SEQUENCE OF 195-204</scope>
    <scope>FUNCTION</scope>
    <scope>DNA-BINDING</scope>
    <scope>COFACTOR</scope>
    <scope>SUBUNIT</scope>
    <source>
        <strain>K12</strain>
    </source>
</reference>
<reference key="6">
    <citation type="journal article" date="2010" name="J. Bacteriol.">
        <title>Specific DNA binding and regulation of its own expression by the AidB protein in Escherichia coli.</title>
        <authorList>
            <person name="Rippa V."/>
            <person name="Amoresano A."/>
            <person name="Esposito C."/>
            <person name="Landini P."/>
            <person name="Volkert M."/>
            <person name="Duilio A."/>
        </authorList>
    </citation>
    <scope>DNA-BINDING</scope>
    <scope>DOMAIN</scope>
    <scope>AUTOREGULATION</scope>
    <scope>INDUCTION</scope>
    <source>
        <strain>K12</strain>
    </source>
</reference>
<reference key="7">
    <citation type="journal article" date="2008" name="Proc. Natl. Acad. Sci. U.S.A.">
        <title>Structure and DNA binding of alkylation response protein AidB.</title>
        <authorList>
            <person name="Bowles T."/>
            <person name="Metz A.H."/>
            <person name="O'Quin J."/>
            <person name="Wawrzak Z."/>
            <person name="Eichman B.F."/>
        </authorList>
    </citation>
    <scope>X-RAY CRYSTALLOGRAPHY (1.7 ANGSTROMS) IN COMPLEX WITH FAD</scope>
    <scope>FUNCTION</scope>
    <scope>COFACTOR</scope>
    <scope>SUBUNIT</scope>
    <scope>MUTAGENESIS OF ARG-437 AND ARG-518</scope>
</reference>
<comment type="function">
    <text evidence="1 2 4">Part of the adaptive DNA-repair response to alkylating agents. Could prevent alkylation damage by protecting DNA and destroying alkylating agents that have yet to reach their DNA target. Binds to double-stranded DNA with a preference for a DNA region that includes its own promoter. Shows weak isovaleryl-CoA dehydrogenase activity in vitro.</text>
</comment>
<comment type="cofactor">
    <cofactor>
        <name>FAD</name>
        <dbReference type="ChEBI" id="CHEBI:57692"/>
    </cofactor>
</comment>
<comment type="subunit">
    <text evidence="1 2">Homotetramer. Dimer of dimers.</text>
</comment>
<comment type="interaction">
    <interactant intactId="EBI-542726">
        <id>P33224</id>
    </interactant>
    <interactant intactId="EBI-542726">
        <id>P33224</id>
        <label>aidB</label>
    </interactant>
    <organismsDiffer>false</organismsDiffer>
    <experiments>3</experiments>
</comment>
<comment type="subcellular location">
    <subcellularLocation>
        <location evidence="5">Cytoplasm</location>
    </subcellularLocation>
</comment>
<comment type="induction">
    <text evidence="3 4">Regulated by Ada in response to alkylating agents. Also induced by anaerobiosis or by acetate at pH 6.5, via RpoS. Represses its own synthesis during normal cell growth.</text>
</comment>
<comment type="domain">
    <text evidence="3">The N-terminal region contains FAD-dependent dehydrogenase activity and the C-terminal region contains DNA-binding activity.</text>
</comment>
<comment type="similarity">
    <text evidence="5">Belongs to the acyl-CoA dehydrogenase family.</text>
</comment>
<comment type="sequence caution" evidence="5">
    <conflict type="erroneous initiation">
        <sequence resource="EMBL-CDS" id="AAA97083"/>
    </conflict>
    <text>Extended N-terminus.</text>
</comment>
<comment type="sequence caution" evidence="5">
    <conflict type="erroneous initiation">
        <sequence resource="EMBL-CDS" id="AAC18889"/>
    </conflict>
    <text>Extended N-terminus.</text>
</comment>
<accession>P33224</accession>
<accession>P33223</accession>
<accession>Q2M6B8</accession>
<keyword id="KW-0002">3D-structure</keyword>
<keyword id="KW-0963">Cytoplasm</keyword>
<keyword id="KW-0903">Direct protein sequencing</keyword>
<keyword id="KW-0238">DNA-binding</keyword>
<keyword id="KW-0274">FAD</keyword>
<keyword id="KW-0285">Flavoprotein</keyword>
<keyword id="KW-0560">Oxidoreductase</keyword>
<keyword id="KW-1185">Reference proteome</keyword>
<keyword id="KW-0346">Stress response</keyword>
<organism>
    <name type="scientific">Escherichia coli (strain K12)</name>
    <dbReference type="NCBI Taxonomy" id="83333"/>
    <lineage>
        <taxon>Bacteria</taxon>
        <taxon>Pseudomonadati</taxon>
        <taxon>Pseudomonadota</taxon>
        <taxon>Gammaproteobacteria</taxon>
        <taxon>Enterobacterales</taxon>
        <taxon>Enterobacteriaceae</taxon>
        <taxon>Escherichia</taxon>
    </lineage>
</organism>
<evidence type="ECO:0000269" key="1">
    <source>
    </source>
</evidence>
<evidence type="ECO:0000269" key="2">
    <source>
    </source>
</evidence>
<evidence type="ECO:0000269" key="3">
    <source>
    </source>
</evidence>
<evidence type="ECO:0000269" key="4">
    <source>
    </source>
</evidence>
<evidence type="ECO:0000305" key="5"/>
<evidence type="ECO:0007829" key="6">
    <source>
        <dbReference type="PDB" id="3DJL"/>
    </source>
</evidence>
<evidence type="ECO:0007829" key="7">
    <source>
        <dbReference type="PDB" id="3U33"/>
    </source>
</evidence>
<proteinExistence type="evidence at protein level"/>
<gene>
    <name type="primary">aidB</name>
    <name type="ordered locus">b4187</name>
    <name type="ordered locus">JW5867</name>
</gene>
<feature type="chain" id="PRO_0000201192" description="Putative acyl-CoA dehydrogenase AidB">
    <location>
        <begin position="1"/>
        <end position="541"/>
    </location>
</feature>
<feature type="region of interest" description="dsDNA-binding">
    <location>
        <begin position="445"/>
        <end position="541"/>
    </location>
</feature>
<feature type="binding site" evidence="2">
    <location>
        <begin position="182"/>
        <end position="191"/>
    </location>
    <ligand>
        <name>FAD</name>
        <dbReference type="ChEBI" id="CHEBI:57692"/>
    </ligand>
</feature>
<feature type="binding site" evidence="2">
    <location>
        <position position="185"/>
    </location>
    <ligand>
        <name>FAD</name>
        <dbReference type="ChEBI" id="CHEBI:57692"/>
    </ligand>
</feature>
<feature type="binding site" evidence="2">
    <location>
        <position position="191"/>
    </location>
    <ligand>
        <name>FAD</name>
        <dbReference type="ChEBI" id="CHEBI:57692"/>
    </ligand>
</feature>
<feature type="binding site" evidence="2">
    <location>
        <begin position="216"/>
        <end position="218"/>
    </location>
    <ligand>
        <name>FAD</name>
        <dbReference type="ChEBI" id="CHEBI:57692"/>
    </ligand>
</feature>
<feature type="binding site" evidence="2">
    <location>
        <position position="218"/>
    </location>
    <ligand>
        <name>FAD</name>
        <dbReference type="ChEBI" id="CHEBI:57692"/>
    </ligand>
</feature>
<feature type="binding site" evidence="2">
    <location>
        <begin position="423"/>
        <end position="433"/>
    </location>
    <ligand>
        <name>FAD</name>
        <dbReference type="ChEBI" id="CHEBI:57692"/>
    </ligand>
</feature>
<feature type="binding site" evidence="2">
    <location>
        <position position="429"/>
    </location>
    <ligand>
        <name>FAD</name>
        <dbReference type="ChEBI" id="CHEBI:57692"/>
    </ligand>
</feature>
<feature type="mutagenesis site" description="Does not affect DNA binding affinity." evidence="2">
    <original>R</original>
    <variation>Q</variation>
    <location>
        <position position="437"/>
    </location>
</feature>
<feature type="mutagenesis site" description="Reduces DNA binding affinity." evidence="2">
    <original>R</original>
    <variation>Q</variation>
    <location>
        <position position="518"/>
    </location>
</feature>
<feature type="turn" evidence="6">
    <location>
        <begin position="20"/>
        <end position="23"/>
    </location>
</feature>
<feature type="helix" evidence="6">
    <location>
        <begin position="25"/>
        <end position="33"/>
    </location>
</feature>
<feature type="helix" evidence="6">
    <location>
        <begin position="37"/>
        <end position="39"/>
    </location>
</feature>
<feature type="helix" evidence="6">
    <location>
        <begin position="40"/>
        <end position="50"/>
    </location>
</feature>
<feature type="helix" evidence="6">
    <location>
        <begin position="53"/>
        <end position="64"/>
    </location>
</feature>
<feature type="strand" evidence="6">
    <location>
        <begin position="68"/>
        <end position="72"/>
    </location>
</feature>
<feature type="strand" evidence="6">
    <location>
        <begin position="78"/>
        <end position="83"/>
    </location>
</feature>
<feature type="helix" evidence="6">
    <location>
        <begin position="86"/>
        <end position="97"/>
    </location>
</feature>
<feature type="turn" evidence="6">
    <location>
        <begin position="98"/>
        <end position="102"/>
    </location>
</feature>
<feature type="helix" evidence="6">
    <location>
        <begin position="103"/>
        <end position="105"/>
    </location>
</feature>
<feature type="helix" evidence="6">
    <location>
        <begin position="113"/>
        <end position="127"/>
    </location>
</feature>
<feature type="helix" evidence="6">
    <location>
        <begin position="132"/>
        <end position="148"/>
    </location>
</feature>
<feature type="helix" evidence="6">
    <location>
        <begin position="151"/>
        <end position="156"/>
    </location>
</feature>
<feature type="helix" evidence="6">
    <location>
        <begin position="157"/>
        <end position="160"/>
    </location>
</feature>
<feature type="helix" evidence="6">
    <location>
        <begin position="172"/>
        <end position="174"/>
    </location>
</feature>
<feature type="strand" evidence="6">
    <location>
        <begin position="175"/>
        <end position="177"/>
    </location>
</feature>
<feature type="strand" evidence="6">
    <location>
        <begin position="180"/>
        <end position="183"/>
    </location>
</feature>
<feature type="strand" evidence="6">
    <location>
        <begin position="189"/>
        <end position="191"/>
    </location>
</feature>
<feature type="helix" evidence="6">
    <location>
        <begin position="193"/>
        <end position="195"/>
    </location>
</feature>
<feature type="strand" evidence="6">
    <location>
        <begin position="199"/>
        <end position="202"/>
    </location>
</feature>
<feature type="strand" evidence="6">
    <location>
        <begin position="208"/>
        <end position="218"/>
    </location>
</feature>
<feature type="strand" evidence="6">
    <location>
        <begin position="222"/>
        <end position="231"/>
    </location>
</feature>
<feature type="strand" evidence="6">
    <location>
        <begin position="234"/>
        <end position="243"/>
    </location>
</feature>
<feature type="strand" evidence="6">
    <location>
        <begin position="251"/>
        <end position="257"/>
    </location>
</feature>
<feature type="strand" evidence="7">
    <location>
        <begin position="260"/>
        <end position="262"/>
    </location>
</feature>
<feature type="strand" evidence="6">
    <location>
        <begin position="268"/>
        <end position="283"/>
    </location>
</feature>
<feature type="helix" evidence="6">
    <location>
        <begin position="287"/>
        <end position="290"/>
    </location>
</feature>
<feature type="helix" evidence="6">
    <location>
        <begin position="292"/>
        <end position="323"/>
    </location>
</feature>
<feature type="helix" evidence="6">
    <location>
        <begin position="331"/>
        <end position="333"/>
    </location>
</feature>
<feature type="helix" evidence="6">
    <location>
        <begin position="335"/>
        <end position="363"/>
    </location>
</feature>
<feature type="turn" evidence="6">
    <location>
        <begin position="364"/>
        <end position="366"/>
    </location>
</feature>
<feature type="helix" evidence="6">
    <location>
        <begin position="368"/>
        <end position="400"/>
    </location>
</feature>
<feature type="helix" evidence="6">
    <location>
        <begin position="401"/>
        <end position="405"/>
    </location>
</feature>
<feature type="helix" evidence="6">
    <location>
        <begin position="411"/>
        <end position="423"/>
    </location>
</feature>
<feature type="helix" evidence="6">
    <location>
        <begin position="424"/>
        <end position="426"/>
    </location>
</feature>
<feature type="helix" evidence="6">
    <location>
        <begin position="427"/>
        <end position="441"/>
    </location>
</feature>
<feature type="helix" evidence="6">
    <location>
        <begin position="445"/>
        <end position="454"/>
    </location>
</feature>
<feature type="turn" evidence="6">
    <location>
        <begin position="455"/>
        <end position="458"/>
    </location>
</feature>
<feature type="helix" evidence="6">
    <location>
        <begin position="461"/>
        <end position="473"/>
    </location>
</feature>
<feature type="helix" evidence="6">
    <location>
        <begin position="479"/>
        <end position="481"/>
    </location>
</feature>
<feature type="helix" evidence="6">
    <location>
        <begin position="482"/>
        <end position="501"/>
    </location>
</feature>
<feature type="helix" evidence="6">
    <location>
        <begin position="504"/>
        <end position="515"/>
    </location>
</feature>
<feature type="helix" evidence="6">
    <location>
        <begin position="525"/>
        <end position="534"/>
    </location>
</feature>
<dbReference type="EC" id="1.3.99.-"/>
<dbReference type="EMBL" id="L20915">
    <property type="protein sequence ID" value="AAC18889.1"/>
    <property type="status" value="ALT_INIT"/>
    <property type="molecule type" value="Genomic_DNA"/>
</dbReference>
<dbReference type="EMBL" id="L20915">
    <property type="protein sequence ID" value="AAC18890.1"/>
    <property type="molecule type" value="Genomic_DNA"/>
</dbReference>
<dbReference type="EMBL" id="U14003">
    <property type="protein sequence ID" value="AAA97083.1"/>
    <property type="status" value="ALT_INIT"/>
    <property type="molecule type" value="Genomic_DNA"/>
</dbReference>
<dbReference type="EMBL" id="U00096">
    <property type="protein sequence ID" value="AAC77144.2"/>
    <property type="molecule type" value="Genomic_DNA"/>
</dbReference>
<dbReference type="EMBL" id="AP009048">
    <property type="protein sequence ID" value="BAE78188.1"/>
    <property type="molecule type" value="Genomic_DNA"/>
</dbReference>
<dbReference type="PIR" id="I41124">
    <property type="entry name" value="I41124"/>
</dbReference>
<dbReference type="RefSeq" id="NP_418608.6">
    <property type="nucleotide sequence ID" value="NC_000913.3"/>
</dbReference>
<dbReference type="RefSeq" id="WP_001350567.1">
    <property type="nucleotide sequence ID" value="NZ_LN832404.1"/>
</dbReference>
<dbReference type="PDB" id="3DJL">
    <property type="method" value="X-ray"/>
    <property type="resolution" value="1.70 A"/>
    <property type="chains" value="A=1-541"/>
</dbReference>
<dbReference type="PDB" id="3U33">
    <property type="method" value="X-ray"/>
    <property type="resolution" value="2.80 A"/>
    <property type="chains" value="A/B/C/D/E/F/G/H/I/J/K/L=1-541"/>
</dbReference>
<dbReference type="PDBsum" id="3DJL"/>
<dbReference type="PDBsum" id="3U33"/>
<dbReference type="SMR" id="P33224"/>
<dbReference type="BioGRID" id="4262695">
    <property type="interactions" value="315"/>
</dbReference>
<dbReference type="DIP" id="DIP-9078N"/>
<dbReference type="FunCoup" id="P33224">
    <property type="interactions" value="352"/>
</dbReference>
<dbReference type="IntAct" id="P33224">
    <property type="interactions" value="32"/>
</dbReference>
<dbReference type="STRING" id="511145.b4187"/>
<dbReference type="jPOST" id="P33224"/>
<dbReference type="PaxDb" id="511145-b4187"/>
<dbReference type="EnsemblBacteria" id="AAC77144">
    <property type="protein sequence ID" value="AAC77144"/>
    <property type="gene ID" value="b4187"/>
</dbReference>
<dbReference type="GeneID" id="948710"/>
<dbReference type="KEGG" id="ecj:JW5867"/>
<dbReference type="KEGG" id="eco:b4187"/>
<dbReference type="KEGG" id="ecoc:C3026_22620"/>
<dbReference type="PATRIC" id="fig|1411691.4.peg.2514"/>
<dbReference type="EchoBASE" id="EB1759"/>
<dbReference type="eggNOG" id="COG1960">
    <property type="taxonomic scope" value="Bacteria"/>
</dbReference>
<dbReference type="HOGENOM" id="CLU_016513_0_0_6"/>
<dbReference type="InParanoid" id="P33224"/>
<dbReference type="OMA" id="IEMVAMT"/>
<dbReference type="OrthoDB" id="9771038at2"/>
<dbReference type="PhylomeDB" id="P33224"/>
<dbReference type="BioCyc" id="EcoCyc:EG11811-MONOMER"/>
<dbReference type="BioCyc" id="MetaCyc:EG11811-MONOMER"/>
<dbReference type="EvolutionaryTrace" id="P33224"/>
<dbReference type="PRO" id="PR:P33224"/>
<dbReference type="Proteomes" id="UP000000625">
    <property type="component" value="Chromosome"/>
</dbReference>
<dbReference type="GO" id="GO:0005737">
    <property type="term" value="C:cytoplasm"/>
    <property type="evidence" value="ECO:0007669"/>
    <property type="project" value="UniProtKB-SubCell"/>
</dbReference>
<dbReference type="GO" id="GO:0008470">
    <property type="term" value="F:3-methylbutanoyl-CoA dehydrogenase activity"/>
    <property type="evidence" value="ECO:0000314"/>
    <property type="project" value="EcoCyc"/>
</dbReference>
<dbReference type="GO" id="GO:0003995">
    <property type="term" value="F:acyl-CoA dehydrogenase activity"/>
    <property type="evidence" value="ECO:0000318"/>
    <property type="project" value="GO_Central"/>
</dbReference>
<dbReference type="GO" id="GO:0003677">
    <property type="term" value="F:DNA binding"/>
    <property type="evidence" value="ECO:0000314"/>
    <property type="project" value="EcoCyc"/>
</dbReference>
<dbReference type="GO" id="GO:0042802">
    <property type="term" value="F:identical protein binding"/>
    <property type="evidence" value="ECO:0000353"/>
    <property type="project" value="IntAct"/>
</dbReference>
<dbReference type="GO" id="GO:0043565">
    <property type="term" value="F:sequence-specific DNA binding"/>
    <property type="evidence" value="ECO:0000314"/>
    <property type="project" value="EcoCyc"/>
</dbReference>
<dbReference type="GO" id="GO:0006974">
    <property type="term" value="P:DNA damage response"/>
    <property type="evidence" value="ECO:0000270"/>
    <property type="project" value="EcoCyc"/>
</dbReference>
<dbReference type="GO" id="GO:0045892">
    <property type="term" value="P:negative regulation of DNA-templated transcription"/>
    <property type="evidence" value="ECO:0000314"/>
    <property type="project" value="EcoCyc"/>
</dbReference>
<dbReference type="CDD" id="cd01154">
    <property type="entry name" value="AidB"/>
    <property type="match status" value="1"/>
</dbReference>
<dbReference type="FunFam" id="2.40.110.20:FF:000001">
    <property type="entry name" value="Acyl-CoA dehydrogenase AidB"/>
    <property type="match status" value="1"/>
</dbReference>
<dbReference type="FunFam" id="1.20.140.10:FF:000022">
    <property type="entry name" value="Acyl-CoA dehydrogenase FadE8"/>
    <property type="match status" value="1"/>
</dbReference>
<dbReference type="Gene3D" id="2.40.110.20">
    <property type="match status" value="1"/>
</dbReference>
<dbReference type="Gene3D" id="6.10.250.600">
    <property type="match status" value="1"/>
</dbReference>
<dbReference type="Gene3D" id="1.20.140.10">
    <property type="entry name" value="Butyryl-CoA Dehydrogenase, subunit A, domain 3"/>
    <property type="match status" value="1"/>
</dbReference>
<dbReference type="InterPro" id="IPR052904">
    <property type="entry name" value="Acyl-CoA_dehydrogenase-like"/>
</dbReference>
<dbReference type="InterPro" id="IPR006089">
    <property type="entry name" value="Acyl-CoA_DH_CS"/>
</dbReference>
<dbReference type="InterPro" id="IPR006091">
    <property type="entry name" value="Acyl-CoA_Oxase/DH_mid-dom"/>
</dbReference>
<dbReference type="InterPro" id="IPR036250">
    <property type="entry name" value="AcylCo_DH-like_C"/>
</dbReference>
<dbReference type="InterPro" id="IPR009075">
    <property type="entry name" value="AcylCo_DH/oxidase_C"/>
</dbReference>
<dbReference type="InterPro" id="IPR009100">
    <property type="entry name" value="AcylCoA_DH/oxidase_NM_dom_sf"/>
</dbReference>
<dbReference type="InterPro" id="IPR034184">
    <property type="entry name" value="AidB"/>
</dbReference>
<dbReference type="InterPro" id="IPR041504">
    <property type="entry name" value="AidB_N"/>
</dbReference>
<dbReference type="NCBIfam" id="NF008594">
    <property type="entry name" value="PRK11561.1"/>
    <property type="match status" value="1"/>
</dbReference>
<dbReference type="PANTHER" id="PTHR42707">
    <property type="entry name" value="ACYL-COA DEHYDROGENASE"/>
    <property type="match status" value="1"/>
</dbReference>
<dbReference type="PANTHER" id="PTHR42707:SF3">
    <property type="entry name" value="ACYL-COA DEHYDROGENASE AIDB-RELATED"/>
    <property type="match status" value="1"/>
</dbReference>
<dbReference type="Pfam" id="PF00441">
    <property type="entry name" value="Acyl-CoA_dh_1"/>
    <property type="match status" value="1"/>
</dbReference>
<dbReference type="Pfam" id="PF02770">
    <property type="entry name" value="Acyl-CoA_dh_M"/>
    <property type="match status" value="1"/>
</dbReference>
<dbReference type="Pfam" id="PF18158">
    <property type="entry name" value="AidB_N"/>
    <property type="match status" value="1"/>
</dbReference>
<dbReference type="SUPFAM" id="SSF47203">
    <property type="entry name" value="Acyl-CoA dehydrogenase C-terminal domain-like"/>
    <property type="match status" value="1"/>
</dbReference>
<dbReference type="SUPFAM" id="SSF56645">
    <property type="entry name" value="Acyl-CoA dehydrogenase NM domain-like"/>
    <property type="match status" value="1"/>
</dbReference>
<dbReference type="PROSITE" id="PS00072">
    <property type="entry name" value="ACYL_COA_DH_1"/>
    <property type="match status" value="1"/>
</dbReference>
<dbReference type="PROSITE" id="PS00073">
    <property type="entry name" value="ACYL_COA_DH_2"/>
    <property type="match status" value="1"/>
</dbReference>
<name>AIDB_ECOLI</name>
<protein>
    <recommendedName>
        <fullName>Putative acyl-CoA dehydrogenase AidB</fullName>
        <ecNumber>1.3.99.-</ecNumber>
    </recommendedName>
</protein>
<sequence>MHWQTHTVFNQPIPLNNSNLYLSDGALCEAVTREGAGWDSDFLASIGQQLGTAESLELGRLANVNPPELLRYDAQGRRLDDVRFHPAWHLLMQALCTNRVHNLAWEEDARSGAFVARAARFMLHAQVEAGSLCPITMTFAATPLLLQMLPAPFQDWTTPLLSDRYDSHLLPGGQKRGLLIGMGMTEKQGGSDVMSNTTRAERLEDGSYRLVGHKWFFSVPQSDAHLVLAQTAGGLSCFFVPRFLPDGQRNAIRLERLKDKLGNRSNASCEVEFQDAIGWLLGLEGEGIRLILKMGGMTRFDCALGSHAMMRRAFSLAIYHAHQRHVFGNPLIQQPLMRHVLSRMALQLEGQTALLFRLARAWDRRADAKEALWARLFTPAAKFVICKRGMPFVAEAMEVLGGIGYCEESELPRLYREMPVNSIWEGSGNIMCLDVLRVLNKQAGVYDLLSEAFVEVKGQDRYFDRAVRRLQQQLRKPAEELGREITHQLFLLGCGAQMLKYASPPMAQAWCQVMLDTRGGVRLSEQIQNDLLLRATGGVCV</sequence>